<dbReference type="EC" id="2.3.1.-" evidence="6"/>
<dbReference type="EC" id="6.3.2.-" evidence="6"/>
<dbReference type="EMBL" id="MW690135">
    <property type="protein sequence ID" value="QXF14613.1"/>
    <property type="molecule type" value="Genomic_DNA"/>
</dbReference>
<dbReference type="SMR" id="A0A8F4S8Q3"/>
<dbReference type="GO" id="GO:0004315">
    <property type="term" value="F:3-oxoacyl-[acyl-carrier-protein] synthase activity"/>
    <property type="evidence" value="ECO:0007669"/>
    <property type="project" value="InterPro"/>
</dbReference>
<dbReference type="GO" id="GO:0004312">
    <property type="term" value="F:fatty acid synthase activity"/>
    <property type="evidence" value="ECO:0007669"/>
    <property type="project" value="TreeGrafter"/>
</dbReference>
<dbReference type="GO" id="GO:0016874">
    <property type="term" value="F:ligase activity"/>
    <property type="evidence" value="ECO:0007669"/>
    <property type="project" value="UniProtKB-KW"/>
</dbReference>
<dbReference type="GO" id="GO:0008168">
    <property type="term" value="F:methyltransferase activity"/>
    <property type="evidence" value="ECO:0007669"/>
    <property type="project" value="UniProtKB-KW"/>
</dbReference>
<dbReference type="GO" id="GO:0031177">
    <property type="term" value="F:phosphopantetheine binding"/>
    <property type="evidence" value="ECO:0007669"/>
    <property type="project" value="InterPro"/>
</dbReference>
<dbReference type="GO" id="GO:0006633">
    <property type="term" value="P:fatty acid biosynthetic process"/>
    <property type="evidence" value="ECO:0007669"/>
    <property type="project" value="InterPro"/>
</dbReference>
<dbReference type="GO" id="GO:1901336">
    <property type="term" value="P:lactone biosynthetic process"/>
    <property type="evidence" value="ECO:0007669"/>
    <property type="project" value="UniProtKB-ARBA"/>
</dbReference>
<dbReference type="GO" id="GO:0032259">
    <property type="term" value="P:methylation"/>
    <property type="evidence" value="ECO:0007669"/>
    <property type="project" value="UniProtKB-KW"/>
</dbReference>
<dbReference type="GO" id="GO:0030639">
    <property type="term" value="P:polyketide biosynthetic process"/>
    <property type="evidence" value="ECO:0007669"/>
    <property type="project" value="UniProtKB-ARBA"/>
</dbReference>
<dbReference type="GO" id="GO:0009403">
    <property type="term" value="P:toxin biosynthetic process"/>
    <property type="evidence" value="ECO:0007669"/>
    <property type="project" value="UniProtKB-ARBA"/>
</dbReference>
<dbReference type="CDD" id="cd05930">
    <property type="entry name" value="A_NRPS"/>
    <property type="match status" value="1"/>
</dbReference>
<dbReference type="CDD" id="cd02440">
    <property type="entry name" value="AdoMet_MTases"/>
    <property type="match status" value="1"/>
</dbReference>
<dbReference type="CDD" id="cd19532">
    <property type="entry name" value="C_PKS-NRPS"/>
    <property type="match status" value="1"/>
</dbReference>
<dbReference type="CDD" id="cd00833">
    <property type="entry name" value="PKS"/>
    <property type="match status" value="1"/>
</dbReference>
<dbReference type="FunFam" id="3.40.47.10:FF:000019">
    <property type="entry name" value="Polyketide synthase type I"/>
    <property type="match status" value="1"/>
</dbReference>
<dbReference type="Gene3D" id="3.30.300.30">
    <property type="match status" value="1"/>
</dbReference>
<dbReference type="Gene3D" id="3.40.47.10">
    <property type="match status" value="1"/>
</dbReference>
<dbReference type="Gene3D" id="1.10.1200.10">
    <property type="entry name" value="ACP-like"/>
    <property type="match status" value="1"/>
</dbReference>
<dbReference type="Gene3D" id="3.30.559.10">
    <property type="entry name" value="Chloramphenicol acetyltransferase-like domain"/>
    <property type="match status" value="1"/>
</dbReference>
<dbReference type="Gene3D" id="3.40.366.10">
    <property type="entry name" value="Malonyl-Coenzyme A Acyl Carrier Protein, domain 2"/>
    <property type="match status" value="1"/>
</dbReference>
<dbReference type="Gene3D" id="3.40.50.12780">
    <property type="entry name" value="N-terminal domain of ligase-like"/>
    <property type="match status" value="1"/>
</dbReference>
<dbReference type="Gene3D" id="3.40.50.720">
    <property type="entry name" value="NAD(P)-binding Rossmann-like Domain"/>
    <property type="match status" value="2"/>
</dbReference>
<dbReference type="Gene3D" id="3.30.559.30">
    <property type="entry name" value="Nonribosomal peptide synthetase, condensation domain"/>
    <property type="match status" value="1"/>
</dbReference>
<dbReference type="Gene3D" id="3.10.129.110">
    <property type="entry name" value="Polyketide synthase dehydratase"/>
    <property type="match status" value="1"/>
</dbReference>
<dbReference type="Gene3D" id="3.40.50.150">
    <property type="entry name" value="Vaccinia Virus protein VP39"/>
    <property type="match status" value="1"/>
</dbReference>
<dbReference type="InterPro" id="IPR010071">
    <property type="entry name" value="AA_adenyl_dom"/>
</dbReference>
<dbReference type="InterPro" id="IPR001227">
    <property type="entry name" value="Ac_transferase_dom_sf"/>
</dbReference>
<dbReference type="InterPro" id="IPR036736">
    <property type="entry name" value="ACP-like_sf"/>
</dbReference>
<dbReference type="InterPro" id="IPR014043">
    <property type="entry name" value="Acyl_transferase_dom"/>
</dbReference>
<dbReference type="InterPro" id="IPR016035">
    <property type="entry name" value="Acyl_Trfase/lysoPLipase"/>
</dbReference>
<dbReference type="InterPro" id="IPR045851">
    <property type="entry name" value="AMP-bd_C_sf"/>
</dbReference>
<dbReference type="InterPro" id="IPR020845">
    <property type="entry name" value="AMP-binding_CS"/>
</dbReference>
<dbReference type="InterPro" id="IPR000873">
    <property type="entry name" value="AMP-dep_synth/lig_dom"/>
</dbReference>
<dbReference type="InterPro" id="IPR042099">
    <property type="entry name" value="ANL_N_sf"/>
</dbReference>
<dbReference type="InterPro" id="IPR023213">
    <property type="entry name" value="CAT-like_dom_sf"/>
</dbReference>
<dbReference type="InterPro" id="IPR001242">
    <property type="entry name" value="Condensatn"/>
</dbReference>
<dbReference type="InterPro" id="IPR013120">
    <property type="entry name" value="Far_NAD-bd"/>
</dbReference>
<dbReference type="InterPro" id="IPR018201">
    <property type="entry name" value="Ketoacyl_synth_AS"/>
</dbReference>
<dbReference type="InterPro" id="IPR014031">
    <property type="entry name" value="Ketoacyl_synth_C"/>
</dbReference>
<dbReference type="InterPro" id="IPR014030">
    <property type="entry name" value="Ketoacyl_synth_N"/>
</dbReference>
<dbReference type="InterPro" id="IPR016036">
    <property type="entry name" value="Malonyl_transacylase_ACP-bd"/>
</dbReference>
<dbReference type="InterPro" id="IPR013217">
    <property type="entry name" value="Methyltransf_12"/>
</dbReference>
<dbReference type="InterPro" id="IPR036291">
    <property type="entry name" value="NAD(P)-bd_dom_sf"/>
</dbReference>
<dbReference type="InterPro" id="IPR032821">
    <property type="entry name" value="PKS_assoc"/>
</dbReference>
<dbReference type="InterPro" id="IPR020841">
    <property type="entry name" value="PKS_Beta-ketoAc_synthase_dom"/>
</dbReference>
<dbReference type="InterPro" id="IPR042104">
    <property type="entry name" value="PKS_dehydratase_sf"/>
</dbReference>
<dbReference type="InterPro" id="IPR020807">
    <property type="entry name" value="PKS_DH"/>
</dbReference>
<dbReference type="InterPro" id="IPR049551">
    <property type="entry name" value="PKS_DH_C"/>
</dbReference>
<dbReference type="InterPro" id="IPR049552">
    <property type="entry name" value="PKS_DH_N"/>
</dbReference>
<dbReference type="InterPro" id="IPR013968">
    <property type="entry name" value="PKS_KR"/>
</dbReference>
<dbReference type="InterPro" id="IPR049900">
    <property type="entry name" value="PKS_mFAS_DH"/>
</dbReference>
<dbReference type="InterPro" id="IPR050091">
    <property type="entry name" value="PKS_NRPS_Biosynth_Enz"/>
</dbReference>
<dbReference type="InterPro" id="IPR020806">
    <property type="entry name" value="PKS_PP-bd"/>
</dbReference>
<dbReference type="InterPro" id="IPR009081">
    <property type="entry name" value="PP-bd_ACP"/>
</dbReference>
<dbReference type="InterPro" id="IPR006162">
    <property type="entry name" value="Ppantetheine_attach_site"/>
</dbReference>
<dbReference type="InterPro" id="IPR029063">
    <property type="entry name" value="SAM-dependent_MTases_sf"/>
</dbReference>
<dbReference type="InterPro" id="IPR016039">
    <property type="entry name" value="Thiolase-like"/>
</dbReference>
<dbReference type="NCBIfam" id="TIGR01733">
    <property type="entry name" value="AA-adenyl-dom"/>
    <property type="match status" value="1"/>
</dbReference>
<dbReference type="PANTHER" id="PTHR43775">
    <property type="entry name" value="FATTY ACID SYNTHASE"/>
    <property type="match status" value="1"/>
</dbReference>
<dbReference type="PANTHER" id="PTHR43775:SF20">
    <property type="entry name" value="HYBRID PKS-NRPS SYNTHETASE APDA"/>
    <property type="match status" value="1"/>
</dbReference>
<dbReference type="Pfam" id="PF00698">
    <property type="entry name" value="Acyl_transf_1"/>
    <property type="match status" value="1"/>
</dbReference>
<dbReference type="Pfam" id="PF00501">
    <property type="entry name" value="AMP-binding"/>
    <property type="match status" value="1"/>
</dbReference>
<dbReference type="Pfam" id="PF00668">
    <property type="entry name" value="Condensation"/>
    <property type="match status" value="1"/>
</dbReference>
<dbReference type="Pfam" id="PF16197">
    <property type="entry name" value="KAsynt_C_assoc"/>
    <property type="match status" value="1"/>
</dbReference>
<dbReference type="Pfam" id="PF00109">
    <property type="entry name" value="ketoacyl-synt"/>
    <property type="match status" value="1"/>
</dbReference>
<dbReference type="Pfam" id="PF02801">
    <property type="entry name" value="Ketoacyl-synt_C"/>
    <property type="match status" value="1"/>
</dbReference>
<dbReference type="Pfam" id="PF08659">
    <property type="entry name" value="KR"/>
    <property type="match status" value="1"/>
</dbReference>
<dbReference type="Pfam" id="PF08242">
    <property type="entry name" value="Methyltransf_12"/>
    <property type="match status" value="1"/>
</dbReference>
<dbReference type="Pfam" id="PF07993">
    <property type="entry name" value="NAD_binding_4"/>
    <property type="match status" value="1"/>
</dbReference>
<dbReference type="Pfam" id="PF21089">
    <property type="entry name" value="PKS_DH_N"/>
    <property type="match status" value="1"/>
</dbReference>
<dbReference type="Pfam" id="PF00550">
    <property type="entry name" value="PP-binding"/>
    <property type="match status" value="1"/>
</dbReference>
<dbReference type="Pfam" id="PF14765">
    <property type="entry name" value="PS-DH"/>
    <property type="match status" value="1"/>
</dbReference>
<dbReference type="SMART" id="SM00827">
    <property type="entry name" value="PKS_AT"/>
    <property type="match status" value="1"/>
</dbReference>
<dbReference type="SMART" id="SM00826">
    <property type="entry name" value="PKS_DH"/>
    <property type="match status" value="1"/>
</dbReference>
<dbReference type="SMART" id="SM00822">
    <property type="entry name" value="PKS_KR"/>
    <property type="match status" value="1"/>
</dbReference>
<dbReference type="SMART" id="SM00825">
    <property type="entry name" value="PKS_KS"/>
    <property type="match status" value="1"/>
</dbReference>
<dbReference type="SMART" id="SM00823">
    <property type="entry name" value="PKS_PP"/>
    <property type="match status" value="2"/>
</dbReference>
<dbReference type="SUPFAM" id="SSF56801">
    <property type="entry name" value="Acetyl-CoA synthetase-like"/>
    <property type="match status" value="1"/>
</dbReference>
<dbReference type="SUPFAM" id="SSF47336">
    <property type="entry name" value="ACP-like"/>
    <property type="match status" value="2"/>
</dbReference>
<dbReference type="SUPFAM" id="SSF52777">
    <property type="entry name" value="CoA-dependent acyltransferases"/>
    <property type="match status" value="2"/>
</dbReference>
<dbReference type="SUPFAM" id="SSF52151">
    <property type="entry name" value="FabD/lysophospholipase-like"/>
    <property type="match status" value="1"/>
</dbReference>
<dbReference type="SUPFAM" id="SSF51735">
    <property type="entry name" value="NAD(P)-binding Rossmann-fold domains"/>
    <property type="match status" value="2"/>
</dbReference>
<dbReference type="SUPFAM" id="SSF55048">
    <property type="entry name" value="Probable ACP-binding domain of malonyl-CoA ACP transacylase"/>
    <property type="match status" value="1"/>
</dbReference>
<dbReference type="SUPFAM" id="SSF53335">
    <property type="entry name" value="S-adenosyl-L-methionine-dependent methyltransferases"/>
    <property type="match status" value="1"/>
</dbReference>
<dbReference type="SUPFAM" id="SSF53901">
    <property type="entry name" value="Thiolase-like"/>
    <property type="match status" value="1"/>
</dbReference>
<dbReference type="PROSITE" id="PS00455">
    <property type="entry name" value="AMP_BINDING"/>
    <property type="match status" value="1"/>
</dbReference>
<dbReference type="PROSITE" id="PS50075">
    <property type="entry name" value="CARRIER"/>
    <property type="match status" value="2"/>
</dbReference>
<dbReference type="PROSITE" id="PS00606">
    <property type="entry name" value="KS3_1"/>
    <property type="match status" value="1"/>
</dbReference>
<dbReference type="PROSITE" id="PS52004">
    <property type="entry name" value="KS3_2"/>
    <property type="match status" value="1"/>
</dbReference>
<dbReference type="PROSITE" id="PS00012">
    <property type="entry name" value="PHOSPHOPANTETHEINE"/>
    <property type="match status" value="2"/>
</dbReference>
<dbReference type="PROSITE" id="PS52019">
    <property type="entry name" value="PKS_MFAS_DH"/>
    <property type="match status" value="1"/>
</dbReference>
<protein>
    <recommendedName>
        <fullName evidence="7">Hybrid PKS-NRPS synthetase gkaA</fullName>
        <ecNumber evidence="6">2.3.1.-</ecNumber>
        <ecNumber evidence="6">6.3.2.-</ecNumber>
    </recommendedName>
    <alternativeName>
        <fullName evidence="7">GKK1032 biosynthesis cluster protein A</fullName>
    </alternativeName>
</protein>
<gene>
    <name evidence="7" type="primary">gkaA</name>
</gene>
<organism>
    <name type="scientific">Penicillium citrinum</name>
    <dbReference type="NCBI Taxonomy" id="5077"/>
    <lineage>
        <taxon>Eukaryota</taxon>
        <taxon>Fungi</taxon>
        <taxon>Dikarya</taxon>
        <taxon>Ascomycota</taxon>
        <taxon>Pezizomycotina</taxon>
        <taxon>Eurotiomycetes</taxon>
        <taxon>Eurotiomycetidae</taxon>
        <taxon>Eurotiales</taxon>
        <taxon>Aspergillaceae</taxon>
        <taxon>Penicillium</taxon>
    </lineage>
</organism>
<keyword id="KW-0436">Ligase</keyword>
<keyword id="KW-0489">Methyltransferase</keyword>
<keyword id="KW-0511">Multifunctional enzyme</keyword>
<keyword id="KW-0596">Phosphopantetheine</keyword>
<keyword id="KW-0597">Phosphoprotein</keyword>
<keyword id="KW-0677">Repeat</keyword>
<keyword id="KW-0808">Transferase</keyword>
<keyword id="KW-0843">Virulence</keyword>
<proteinExistence type="evidence at protein level"/>
<sequence length="3977" mass="434196">MSVEEPIAVIGSGLRFPGSSTSPSKLWDLLTKPRDLLTRIPENRFNADAHHHPNPDHHGTLNVTESYFIDQDHRHFDANFFNIKAIEVSAIDPQQRLLMEVVYESLEAAGLSIESLAGSQTGVYVGQMCGDHSDLLNSDVNALPTYTATGNARSIMSNRISYFFDWHGPSMTIDTACSSSLVAVHQAVQLLRSGDSRVTVAAGTNMILAPMQYVGASKLHMLAADSRSRMWDVDASGYARGEGVAAVILKRLSDAIADGDNIECVIRSSGVNQDGRTKGITVPSSTAQRDLIFRTYAKAGLDPLNPKERCQYFEAHGTGTAAGDPKEAEAISQSFFYPDENVKSKDEVPLYVGSIKTVIGHTEGTAGLAGLIKASLALQHGVIPPNLLFNKLHPNIEPFYTNLEVPTSLKTWPALPEGIPRRASINSFGFGGTNAHVILENYTTPTPQETSSAASQQFTPFVFSAASEKSLRGILGDYMEYLSANPDVSLKDLSYTLYGRRSEHAIRTSFSASSVSDLQAKIKERVREGSNGQNIGVRAKVSSSMPRLLGVFTGQGAQWPTMSRELVLHSPYARKVVQELEAVLQTLPEPERPHWSLMDELLCDASKSRLDSAQIAQPLCTVVQIILFDLIQAAGVKFEAVVGHSSGEIAAAYAAGCITRDDAVKIAYYRGYFTHHTPSSKPGAMMAAGTSFEDANELCNLPMFKGRLAVAAINSSTSVTISGDRDAIEQAKEILEDEQKFARLLKVDKAYHSSHMIPCSTGYVEALKGCNIQPQQGAKDCTWYSSTYEKREMHGDEDLAGQYWADNMVRPVLFSQAVVSASAGGAFDLGVEVGPHPALKGPAVQTIQETQKDPILYTGVIHRGKNDTEAVSDALGYIWSQLSTYKLDLRSFDSLVSGDNSRSVVPDLPTYHWDHDTLYWHNTRASKAFLGRKTGTNPLLGTRTTDIMEHEMRWRNLLRLNEKPWINGHQLQGQVVYPATAYIATAVEAARFIVPNEEDVAVIEVHDFSLGKPLVFSEGDSGIETVFAVDGITMTSENTYSASFVFHASSSAEADQLSTHATGRITVTLGESSSSLFPTRQPDLPNLVSIPQDRFYASLEPLGYSYSGWFRTLSSIKRRMNFSSSQITVPPQDDEPEKMLLHPALLDSALQGIFLAYCWPGDGSLEQLHVPTGIKTFRVNAGLCRQTLIPSSDVSACSQLTSNPIATRQLNGDVEIYAPDGTGLVQMEGIKVVAFSEATADMDRAIFSENVWGVAAPSCELVMGDQRATEEDYEFSYAMERVSINYMKKTVEEFPEEKRKTMGLEWHFERMFDFFNDVLTTVKAGSRSCAQSEWVNDDKETIAALKAKHGHRVDMQLACQVGDHLAPVLRGETTILEHMTKDNLLNRFYEVGLGLKEFSYLLGKTVKQVVHRDPRMKILEIGAGTGGATKLIMSDIGRSFASYTYTDISTGFFETAQEVFSLFSDKMIFKTLDIEKDIVQQGYEEHTYDLVVASLVLHATTDIHRTLTNARRLLKPGGQLIILEVSNNDVSRVGFMMCALPGWWLGQNDGRTLSPCISTLEWHNALLQSGFSGIDSSTPESDAIPYPLAIIVSQAVDDRVALLREPLSAAGLQAAVDTELDLVLVGGQTLNTTRLVQGILRLLPTGTKHTIFKTLCDVDVAKVSPKSAILVLTELDEPVFKRLTDKALKGLQALFESQRTVLWITQGSRSENPFMNMSVGLGRSLVLENPDLTLQFLDLEVNSKPDPRSLLESLMRLRQGDILKRGGQLEELHWTNEHELAYENGNLVLSRVYQSKALNNRYNAFKRTITETVTLDSDSAPVKLSSDASSRHTLMHDASLASRLLDSQSLHGTGAEVLINVTHSLLAPIATRPDTAYLVLGVNLSTGASTIAVTPTNGSRALVSSEKSIEVTILPGNEISFLSSLAVELRSVSILSVCRPGSTLLVHEPTPAIASSILKRAGDTNIKVHFSTASQPKSADDWIFIDVYSPKRVVVASIPADVSTLVDCAARQGKNFSSCGSLIASCLPATSLQINLDGASPLQQMLEPSGAHSIQHLLPDVVQRALIETAESSAGQPVNELVTLDLEQLVGSDVDQSQQAIVSWTGTAKIPVQLSTVESQVKFRPDRTYVLFGLTSDLAQSICDWMASRGARNIVLTSRNPKIEYQWVELLAKKGVRLEAFANDITDKAALSTLVENLRHNYPPIAGICHGAMVLDDTSFFEMPFEKMQKVLGPKVKGAIFLDEIFQNDVLDFFVFFSSVTAIAGNRGQSAYTTANMFMSSLVTQRRQRGLAASILHIGAVMGVGYINRGFSDAIFAALRKTGFMMMSEREFHLCFAEAVVASHPCSDLNPEVITALETIRSTEVRPPWADFPRFQHCVQLEEAGDKKEKKKTAAVSVKIRLQEAVNASEVFEIISGAFFQKLQISLQLPSETEKAHVLASGLDDLGVDSLIAVEIRSWFGKEIETEIPVFKVLSGGSVAQLLEYAIDNMPAKLVPHSNGEQGTVSDSGSTNIQLTPASTPSVPSVNLASDSTGSSQVGEDVDSSVDMVVTPLETPFEDAEIKRTLSITEIEPPAEKTPPPNFEKIIPMSPGQSRFWFLKHLMKDQTTANSTILVAIDGNLRLDSLEDAVRKIAAHHEAFRTSFFTDENHKPVQAISALSRLFLERKVVASESQVKEEFEKLKNHVYDLEHGETLRLVHLCLTPTKSYLVIGSHHITLDGISLEVFLQTLQHAYNGQPLSKNTFQYSDYSEKLRQEISSGSLQSDIEYWKVELANHPPALPLLPFSSTKTRQPLEEYSHVSLNRIVPAALAKQIQETCHRLKANIFHFYLGVFEILLFKLLGTSDVCIGMADANRWDDRVAQSIGMYLNLLPLRFHLDSTQSFEAVLKETRRKAYLAMSHSRLPFDVLLENVECDRSTSFSPLFQAFINYRQGVSETRKFGGATGTTTEISLPRAGYDISLDIIENPGQDTRVTFMLQKTLYGEEETTKVLDLYFKLLGSVSRMSGQSLKDISLFSKEDIHNAVQLGQGPNSPSTWPATLPARIENIIAEHPDTISIKQVTGQSWSYQQLNAEVNRISSALLGAGVTKGSVVAVFQDASASQVFSLLAIYRIGAIYAPLDVNIPAERLQVIVAECKPSAVLVNESTVNNSSDLALPSSTHVLEVSSLPNGAHVPAANLTSSDPAAMLFTSGTSGVPKGVVLSHGNFRNHVESLTVTHGFGSETVLQQSSVGFDMSLNQIFIALANAGTLVIVPESLRKDFSSLSQIILDHRVTYTSATPSEYLAWYRHGADNLSKSGSWKFATSGGEKFSAELIDVFRQLSSQFLQSLRIFNAYGPTECSLSSNELEVNLNTPKITAGRTLPNYAVCIVDEDSNPQPIGFPGEIYISGAGVAIGYLNNTEETTRKFIKTSFSGKAYRTGDKGVLHADGALEILGRIDGDTQVKLRGLRIELQDVEKSILTASNGQLNEVVVTPVGTPTMLVAHAVLSSTVPTANTQSFLQELVSSLPLPQYMRPSFIRPIDRIPLTTSGKTDRKALQALGLPFASVQEEDEFSLTPTEDKLARVWDSILPLQSQGLHTLTSASDFFQVGGNSMLLIDLRNAVRREFDIDIPLLRLFEHSSISAMASLITPASSESSHSIDWASEVAIPPTLLSSQPKSSANCPHHPPQTVLLTGATGFLGHNVLKGLVEDSNITKIHCIAVRDSTKLASSIDSEKIVIHTGDLSLPRLGLSTAAFAALSNSADVIIHNGADVSFLKTYKTLRAANVEATKALVQIALPRKVPVHFVSTGTVGKLIGGESLEPTSLASYPPSEGFKDGYAATKWVSEVLLENVGNELGLPVVIHRPSSITGEGAGESDIVPNVVRYANLLKAAPESKGWTGFVDLVSVQNVVDGLLGSVTGDRGNGVQYIHHSGENVIPANRIGEMLQKDGKEEWDVLDMTEWVDKAIQKGMNPLIGEFLKNAGKGKGLQIGQRLLKE</sequence>
<comment type="function">
    <text evidence="6 9">Hybrid PKS-NRPS synthetase; part of the gene cluster that mediates the biosynthesis of GKK1032, fungal natural products containing a macrocyclic para-cyclophane connected to a decahydrofluorene ring system that show potent antitumor activities (PubMed:33834778). Within the pathway, the PKS-NRPS gkaA, with the help of the trans-enoyl reductase gkaC, synthesize the polyketide-tyrosyl acyl thioester product which can be reductively off-loaded by the terminal reductase (R) domain in gkaA (PubMed:33834778). The PKS module of gkaA acts in combination with the trans-acting enoyl reductase gkaC to produce a methylated polyketide attached to the ACP domain (PubMed:33834778). In parallel, the adenylation (A) domain of the NRPS module activated L-tyrosine, which is then transferred to the ACP domain. The condensation (C) domain subsequently links this group to the polyketide chain, forming an enzyme-bound amide (PubMed:33834778). The alpha/beta hydrolase gkaG is then required to catalyze the subsequent Knoevenagel condensation that affords the 3-pyrrolin-2-one ring, whereas the three proteins gkaB, gkadX and gkaZ then function synergistically to form the cyclophane (Probable).</text>
</comment>
<comment type="cofactor">
    <cofactor evidence="2">
        <name>pantetheine 4'-phosphate</name>
        <dbReference type="ChEBI" id="CHEBI:47942"/>
    </cofactor>
</comment>
<comment type="pathway">
    <text evidence="6">Mycotoxin biosynthesis.</text>
</comment>
<comment type="domain">
    <text evidence="9">NRP synthetases are composed of discrete domains (adenylation (A), thiolation (T) or peptidyl carrier protein (PCP) and condensation (C) domains) which when grouped together are referred to as a single module. Each module is responsible for the recognition (via the A domain) and incorporation of a single amino acid into the growing peptide product. Thus, an NRP synthetase is generally composed of one or more modules and can terminate in a thioesterase domain (TE) that releases the newly synthesized peptide from the enzyme. Occasionally, epimerase (E) domains (responsible for L- to D-amino acid conversion) are present within the NRP synthetase. XenE also contains a polyketide synthase module (PKS) consisting of several catalytic domains including a ketoacyl synthase domain (KS), an acyl transferase domain (AT), a dehydratase domain (DH), a methyltransferase domain (cMeT), and a ketoreductase domain (KR). Instead of a thioesterase domain (TE), XenE finishes with a reductase-like domain (R) for peptide release. XenE has the following architecture: KS-MAT-DH-cMET-KR-PCP-C-A-T-R.</text>
</comment>
<comment type="similarity">
    <text evidence="8">In the C-terminal section; belongs to the NRP synthetase family.</text>
</comment>
<feature type="chain" id="PRO_0000458423" description="Hybrid PKS-NRPS synthetase gkaA">
    <location>
        <begin position="1"/>
        <end position="3977"/>
    </location>
</feature>
<feature type="domain" description="Ketosynthase family 3 (KS3)" evidence="3">
    <location>
        <begin position="4"/>
        <end position="441"/>
    </location>
</feature>
<feature type="domain" description="Malonyl-CoA:ACP transacylase (MAT)" evidence="1 9">
    <location>
        <begin position="551"/>
        <end position="867"/>
    </location>
</feature>
<feature type="domain" description="PKS/mFAS DH" evidence="4">
    <location>
        <begin position="937"/>
        <end position="1241"/>
    </location>
</feature>
<feature type="domain" description="Ketoreductase (KR)" evidence="1 9">
    <location>
        <begin position="2128"/>
        <end position="2301"/>
    </location>
</feature>
<feature type="domain" description="Carrier 1" evidence="2">
    <location>
        <begin position="2409"/>
        <end position="2490"/>
    </location>
</feature>
<feature type="domain" description="Carrier 2" evidence="2">
    <location>
        <begin position="3552"/>
        <end position="3632"/>
    </location>
</feature>
<feature type="domain" description="Thioester reductase (TE)" evidence="1 9">
    <location>
        <begin position="3672"/>
        <end position="3890"/>
    </location>
</feature>
<feature type="region of interest" description="N-terminal hotdog fold" evidence="4">
    <location>
        <begin position="937"/>
        <end position="1072"/>
    </location>
</feature>
<feature type="region of interest" description="C-terminal hotdog fold" evidence="4">
    <location>
        <begin position="1087"/>
        <end position="1241"/>
    </location>
</feature>
<feature type="region of interest" description="Methyltransferase (cMeT) domain" evidence="1 9">
    <location>
        <begin position="1286"/>
        <end position="1580"/>
    </location>
</feature>
<feature type="region of interest" description="Disordered" evidence="5">
    <location>
        <begin position="2497"/>
        <end position="2542"/>
    </location>
</feature>
<feature type="region of interest" description="Condensation" evidence="1 9">
    <location>
        <begin position="2584"/>
        <end position="3018"/>
    </location>
</feature>
<feature type="region of interest" description="Adenylation" evidence="1 9">
    <location>
        <begin position="3048"/>
        <end position="3437"/>
    </location>
</feature>
<feature type="compositionally biased region" description="Polar residues" evidence="5">
    <location>
        <begin position="2499"/>
        <end position="2538"/>
    </location>
</feature>
<feature type="active site" description="For beta-ketoacyl synthase activity" evidence="3">
    <location>
        <position position="177"/>
    </location>
</feature>
<feature type="active site" description="For beta-ketoacyl synthase activity" evidence="3">
    <location>
        <position position="316"/>
    </location>
</feature>
<feature type="active site" description="For beta-ketoacyl synthase activity" evidence="3">
    <location>
        <position position="361"/>
    </location>
</feature>
<feature type="active site" description="Proton acceptor; for dehydratase activity" evidence="4">
    <location>
        <position position="969"/>
    </location>
</feature>
<feature type="active site" description="Proton donor; for dehydratase activity" evidence="4">
    <location>
        <position position="1147"/>
    </location>
</feature>
<feature type="modified residue" description="O-(pantetheine 4'-phosphoryl)serine" evidence="2">
    <location>
        <position position="2450"/>
    </location>
</feature>
<feature type="modified residue" description="O-(pantetheine 4'-phosphoryl)serine" evidence="2">
    <location>
        <position position="3592"/>
    </location>
</feature>
<evidence type="ECO:0000255" key="1"/>
<evidence type="ECO:0000255" key="2">
    <source>
        <dbReference type="PROSITE-ProRule" id="PRU00258"/>
    </source>
</evidence>
<evidence type="ECO:0000255" key="3">
    <source>
        <dbReference type="PROSITE-ProRule" id="PRU01348"/>
    </source>
</evidence>
<evidence type="ECO:0000255" key="4">
    <source>
        <dbReference type="PROSITE-ProRule" id="PRU01363"/>
    </source>
</evidence>
<evidence type="ECO:0000256" key="5">
    <source>
        <dbReference type="SAM" id="MobiDB-lite"/>
    </source>
</evidence>
<evidence type="ECO:0000269" key="6">
    <source>
    </source>
</evidence>
<evidence type="ECO:0000303" key="7">
    <source>
    </source>
</evidence>
<evidence type="ECO:0000305" key="8"/>
<evidence type="ECO:0000305" key="9">
    <source>
    </source>
</evidence>
<accession>A0A8F4S8Q3</accession>
<name>GKAA_PENCI</name>
<reference key="1">
    <citation type="journal article" date="2021" name="J. Am. Chem. Soc.">
        <title>Biosynthesis of para-cyclophane-containing hirsutellone family of fungal natural products.</title>
        <authorList>
            <person name="Ohashi M."/>
            <person name="Kakule T.B."/>
            <person name="Tang M.C."/>
            <person name="Jamieson C.S."/>
            <person name="Liu M."/>
            <person name="Zhao Y.L."/>
            <person name="Houk K.N."/>
            <person name="Tang Y."/>
        </authorList>
    </citation>
    <scope>NUCLEOTIDE SEQUENCE [GENOMIC DNA]</scope>
    <scope>FUNCTION</scope>
    <scope>CATALYTIC ACTIVITY</scope>
    <scope>DOMAIN</scope>
    <scope>PATHWAY</scope>
    <source>
        <strain>DSM 1997</strain>
    </source>
</reference>